<sequence>MFSKVLPFVGAVAALPHSVRQEPGSGIGYPYDNNTLPYVAPGPTDSRAPCPALNALANHGYIPHDGRAISRETLQNAFLNHMGIANSVIELALTNAFVVCEYVTGSDCGDSLVNLTLLAEPHAFEHDHSFSRKDYKQGVANSNDFIDNRNFDAETFQTSLDVVAGKTHFDYADMNEIRLQRESLSNELDFPGWFTESKPIQNVESGFIFALVSDFNLPDNDENPLVRIDWWKYWFTNESFPYHLGWHPPSPAREIEFVTSASSAVLAASVTSTPSSLPSGAIGPGAEAVPLSFASTMTPFLLATNAPYYAQDPTLGPNDKREAAPAATTSMAVFKNPYLEAIGTQDIKNQQAYVSSKAAAMASAMAANKARNL</sequence>
<comment type="function">
    <text>Catalyzes peroxidative halogenations involved in the biosynthesis of clardariomycin (2,2-dichloro-1,3-cyclo-pentenedione). The enzyme also has potent catalase activity and in the absence of halide ion, acts as a peroxidase similar to plant peroxidases.</text>
</comment>
<comment type="catalytic activity">
    <reaction>
        <text>RH + Cl(-) + H2O2 = RCl + 2 H2O.</text>
        <dbReference type="EC" id="1.11.1.10"/>
    </reaction>
</comment>
<comment type="cofactor">
    <cofactor>
        <name>heme b</name>
        <dbReference type="ChEBI" id="CHEBI:60344"/>
    </cofactor>
    <text>Binds 1 heme b (iron(II)-protoporphyrin IX) group per subunit.</text>
</comment>
<comment type="cofactor">
    <cofactor>
        <name>Mn(2+)</name>
        <dbReference type="ChEBI" id="CHEBI:29035"/>
    </cofactor>
    <text>Binds 1 Mn(2+) ion per subunit.</text>
</comment>
<comment type="PTM">
    <text>N- and O-glycosylated.</text>
</comment>
<comment type="similarity">
    <text evidence="3">Belongs to the chloroperoxidase family.</text>
</comment>
<comment type="caution">
    <text evidence="3">The O-glycosylation on Ser-269 is identified in PubMed:8747463 as D-xylose based on weak electron density. Such a modification has not been reported in the fungi, and the saccharide is probably D-mannose as at the other positions.</text>
</comment>
<comment type="sequence caution" evidence="3">
    <conflict type="frameshift">
        <sequence resource="EMBL-CDS" id="AAA33026"/>
    </conflict>
</comment>
<comment type="sequence caution" evidence="3">
    <conflict type="frameshift">
        <sequence resource="EMBL-CDS" id="CAA28172"/>
    </conflict>
</comment>
<protein>
    <recommendedName>
        <fullName>Chloroperoxidase</fullName>
        <ecNumber>1.11.1.10</ecNumber>
    </recommendedName>
    <alternativeName>
        <fullName>Chloride peroxidase</fullName>
        <shortName>CPO</shortName>
    </alternativeName>
</protein>
<reference key="1">
    <citation type="journal article" date="1986" name="Nucleic Acids Res.">
        <title>Cloning and sequencing of chloroperoxidase cDNA.</title>
        <authorList>
            <person name="Fang G.-H."/>
            <person name="Kenigsberg P."/>
            <person name="Axley M.J."/>
            <person name="Nuell M."/>
            <person name="Hager L.P."/>
        </authorList>
    </citation>
    <scope>NUCLEOTIDE SEQUENCE [MRNA]</scope>
    <scope>PARTIAL PROTEIN SEQUENCE</scope>
    <source>
        <strain>ATCC 16373 / DSM 1256 / SC 3815 / VTT D-02910</strain>
    </source>
</reference>
<reference key="2">
    <citation type="journal article" date="1988" name="J. Bacteriol.">
        <title>Isolation and nucleotide sequence of the chloroperoxidase gene from Caldariomyces fumago.</title>
        <authorList>
            <person name="Nuell M.J."/>
            <person name="Fang G.-H."/>
            <person name="Axley M.J."/>
            <person name="Kenigsberg P."/>
            <person name="Hager L.P."/>
        </authorList>
    </citation>
    <scope>NUCLEOTIDE SEQUENCE [GENOMIC DNA]</scope>
</reference>
<reference key="3">
    <citation type="journal article" date="2001" name="J. Biol. Chem.">
        <title>Expression of the Caldariomyces fumago Chloroperoxidase in Aspergillus niger and characterization of the recombinant enzyme.</title>
        <authorList>
            <person name="Conesa A."/>
            <person name="an de Velde F."/>
            <person name="van Rantwijk F."/>
            <person name="Sheldon R.A."/>
            <person name="van den Hondel C.A.M.J.J."/>
            <person name="Punt P.J."/>
        </authorList>
    </citation>
    <scope>NUCLEOTIDE SEQUENCE [GENOMIC DNA]</scope>
</reference>
<reference key="4">
    <citation type="journal article" date="1986" name="J. Biol. Chem.">
        <title>Fructose induces and glucose represses chloroperoxidase mRNA levels.</title>
        <authorList>
            <person name="Axley M.J."/>
            <person name="Kenigsberg P."/>
            <person name="Hager L.P."/>
        </authorList>
    </citation>
    <scope>NUCLEOTIDE SEQUENCE [MRNA] OF 1-175</scope>
</reference>
<reference key="5">
    <citation type="unpublished observations" date="1996-02">
        <authorList>
            <person name="Hager L.P."/>
        </authorList>
    </citation>
    <scope>SEQUENCE REVISION TO C-TERMINUS</scope>
</reference>
<reference key="6">
    <citation type="journal article" date="1988" name="J. Biol. Chem.">
        <title>Identification of the fifth axial heme ligand of chloroperoxidase.</title>
        <authorList>
            <person name="Blanke S.R."/>
            <person name="Hager L.P."/>
        </authorList>
    </citation>
    <scope>DETERMINATION OF HEME LIGAND</scope>
</reference>
<reference key="7">
    <citation type="journal article" date="1999" name="Proc. Natl. Acad. Sci. U.S.A.">
        <title>Replacement of the proximal heme thiolate ligand in chloroperoxidase with a histidine residue.</title>
        <authorList>
            <person name="Yi X."/>
            <person name="Mroczko M."/>
            <person name="Manoj K.M."/>
            <person name="Wang X."/>
            <person name="Hager L.P."/>
        </authorList>
    </citation>
    <scope>MUTAGENESIS OF CYS-50</scope>
</reference>
<reference key="8">
    <citation type="journal article" date="1995" name="Structure">
        <title>The crystal structure of chloroperoxidase: a heme peroxidase-cytochrome P450 functional hybrid.</title>
        <authorList>
            <person name="Sundaramoorthy M."/>
            <person name="Terner J."/>
            <person name="Poulos T.L."/>
        </authorList>
    </citation>
    <scope>X-RAY CRYSTALLOGRAPHY (1.9 ANGSTROMS)</scope>
    <scope>PYROGLUTAMATE FORMATION AT GLN-21</scope>
    <source>
        <strain>ATCC 16373 / DSM 1256 / SC 3815 / VTT D-02910</strain>
    </source>
</reference>
<accession>P04963</accession>
<accession>Q92216</accession>
<accession>Q9HFP2</accession>
<evidence type="ECO:0000269" key="1">
    <source>
    </source>
</evidence>
<evidence type="ECO:0000269" key="2">
    <source>
    </source>
</evidence>
<evidence type="ECO:0000305" key="3"/>
<evidence type="ECO:0007829" key="4">
    <source>
        <dbReference type="PDB" id="1CPO"/>
    </source>
</evidence>
<evidence type="ECO:0007829" key="5">
    <source>
        <dbReference type="PDB" id="2CIW"/>
    </source>
</evidence>
<feature type="signal peptide">
    <location>
        <begin position="1"/>
        <end position="20"/>
    </location>
</feature>
<feature type="chain" id="PRO_0000023631" description="Chloroperoxidase">
    <location>
        <begin position="21"/>
        <end position="319"/>
    </location>
</feature>
<feature type="propeptide" id="PRO_0000023632">
    <location>
        <begin position="322"/>
        <end position="373"/>
    </location>
</feature>
<feature type="active site">
    <location>
        <position position="204"/>
    </location>
</feature>
<feature type="binding site" description="axial binding residue">
    <location>
        <position position="50"/>
    </location>
    <ligand>
        <name>heme</name>
        <dbReference type="ChEBI" id="CHEBI:30413"/>
    </ligand>
    <ligandPart>
        <name>Fe</name>
        <dbReference type="ChEBI" id="CHEBI:18248"/>
    </ligandPart>
</feature>
<feature type="binding site">
    <location>
        <position position="125"/>
    </location>
    <ligand>
        <name>Mn(2+)</name>
        <dbReference type="ChEBI" id="CHEBI:29035"/>
    </ligand>
</feature>
<feature type="binding site">
    <location>
        <position position="126"/>
    </location>
    <ligand>
        <name>Mn(2+)</name>
        <dbReference type="ChEBI" id="CHEBI:29035"/>
    </ligand>
</feature>
<feature type="binding site">
    <location>
        <position position="129"/>
    </location>
    <ligand>
        <name>Mn(2+)</name>
        <dbReference type="ChEBI" id="CHEBI:29035"/>
    </ligand>
</feature>
<feature type="modified residue" description="Pyrrolidone carboxylic acid" evidence="2">
    <location>
        <position position="21"/>
    </location>
</feature>
<feature type="glycosylation site" description="N-linked (GlcNAc...) asparagine">
    <location>
        <position position="33"/>
    </location>
</feature>
<feature type="glycosylation site" description="N-linked (GlcNAc...) asparagine">
    <location>
        <position position="114"/>
    </location>
</feature>
<feature type="glycosylation site" description="N-linked (GlcNAc...) asparagine">
    <location>
        <position position="237"/>
    </location>
</feature>
<feature type="glycosylation site" description="O-linked (Man) threonine">
    <location>
        <position position="259"/>
    </location>
</feature>
<feature type="glycosylation site" description="O-linked (Man) serine">
    <location>
        <position position="260"/>
    </location>
</feature>
<feature type="glycosylation site" description="O-linked (Man) serine">
    <location>
        <position position="262"/>
    </location>
</feature>
<feature type="glycosylation site" description="O-linked (Man) serine">
    <location>
        <position position="263"/>
    </location>
</feature>
<feature type="glycosylation site" description="O-linked (Man) serine" evidence="3">
    <location>
        <position position="269"/>
    </location>
</feature>
<feature type="glycosylation site" description="O-linked (Man) threonine">
    <location>
        <position position="271"/>
    </location>
</feature>
<feature type="glycosylation site" description="O-linked (Man) serine">
    <location>
        <position position="272"/>
    </location>
</feature>
<feature type="glycosylation site" description="O-linked (Man) threonine">
    <location>
        <position position="273"/>
    </location>
</feature>
<feature type="glycosylation site" description="O-linked (Man...) threonine">
    <location>
        <position position="296"/>
    </location>
</feature>
<feature type="glycosylation site" description="O-linked (Man...) threonine">
    <location>
        <position position="304"/>
    </location>
</feature>
<feature type="glycosylation site" description="O-linked (Man...) threonine">
    <location>
        <position position="314"/>
    </location>
</feature>
<feature type="disulfide bond">
    <location>
        <begin position="100"/>
        <end position="108"/>
    </location>
</feature>
<feature type="mutagenesis site" description="Retains most of the chlorination, peroxidation, epoxidation, and catalase activities." evidence="1">
    <original>C</original>
    <variation>H</variation>
    <location>
        <position position="50"/>
    </location>
</feature>
<feature type="helix" evidence="5">
    <location>
        <begin position="23"/>
        <end position="25"/>
    </location>
</feature>
<feature type="turn" evidence="5">
    <location>
        <begin position="27"/>
        <end position="31"/>
    </location>
</feature>
<feature type="helix" evidence="5">
    <location>
        <begin position="51"/>
        <end position="58"/>
    </location>
</feature>
<feature type="strand" evidence="5">
    <location>
        <begin position="67"/>
        <end position="69"/>
    </location>
</feature>
<feature type="helix" evidence="5">
    <location>
        <begin position="71"/>
        <end position="82"/>
    </location>
</feature>
<feature type="helix" evidence="5">
    <location>
        <begin position="86"/>
        <end position="104"/>
    </location>
</feature>
<feature type="strand" evidence="5">
    <location>
        <begin position="111"/>
        <end position="115"/>
    </location>
</feature>
<feature type="helix" evidence="5">
    <location>
        <begin position="116"/>
        <end position="119"/>
    </location>
</feature>
<feature type="turn" evidence="5">
    <location>
        <begin position="121"/>
        <end position="124"/>
    </location>
</feature>
<feature type="strand" evidence="5">
    <location>
        <begin position="130"/>
        <end position="132"/>
    </location>
</feature>
<feature type="helix" evidence="5">
    <location>
        <begin position="153"/>
        <end position="162"/>
    </location>
</feature>
<feature type="turn" evidence="5">
    <location>
        <begin position="163"/>
        <end position="165"/>
    </location>
</feature>
<feature type="strand" evidence="5">
    <location>
        <begin position="167"/>
        <end position="169"/>
    </location>
</feature>
<feature type="helix" evidence="5">
    <location>
        <begin position="171"/>
        <end position="188"/>
    </location>
</feature>
<feature type="turn" evidence="5">
    <location>
        <begin position="191"/>
        <end position="193"/>
    </location>
</feature>
<feature type="helix" evidence="5">
    <location>
        <begin position="198"/>
        <end position="212"/>
    </location>
</feature>
<feature type="turn" evidence="5">
    <location>
        <begin position="218"/>
        <end position="222"/>
    </location>
</feature>
<feature type="helix" evidence="5">
    <location>
        <begin position="228"/>
        <end position="237"/>
    </location>
</feature>
<feature type="helix" evidence="5">
    <location>
        <begin position="242"/>
        <end position="244"/>
    </location>
</feature>
<feature type="helix" evidence="5">
    <location>
        <begin position="255"/>
        <end position="267"/>
    </location>
</feature>
<feature type="turn" evidence="4">
    <location>
        <begin position="311"/>
        <end position="314"/>
    </location>
</feature>
<gene>
    <name type="primary">CPO</name>
</gene>
<organism>
    <name type="scientific">Leptoxyphium fumago</name>
    <name type="common">Caldariomyces fumago</name>
    <dbReference type="NCBI Taxonomy" id="5474"/>
    <lineage>
        <taxon>Eukaryota</taxon>
        <taxon>Fungi</taxon>
        <taxon>Dikarya</taxon>
        <taxon>Ascomycota</taxon>
        <taxon>Pezizomycotina</taxon>
        <taxon>Dothideomycetes</taxon>
        <taxon>Dothideomycetidae</taxon>
        <taxon>Capnodiales</taxon>
        <taxon>Capnodiaceae</taxon>
        <taxon>Leptoxyphium</taxon>
    </lineage>
</organism>
<name>PRXC_LEPFU</name>
<keyword id="KW-0002">3D-structure</keyword>
<keyword id="KW-0868">Chloride</keyword>
<keyword id="KW-0165">Cleavage on pair of basic residues</keyword>
<keyword id="KW-0903">Direct protein sequencing</keyword>
<keyword id="KW-1015">Disulfide bond</keyword>
<keyword id="KW-0325">Glycoprotein</keyword>
<keyword id="KW-0349">Heme</keyword>
<keyword id="KW-0408">Iron</keyword>
<keyword id="KW-0464">Manganese</keyword>
<keyword id="KW-0479">Metal-binding</keyword>
<keyword id="KW-0560">Oxidoreductase</keyword>
<keyword id="KW-0575">Peroxidase</keyword>
<keyword id="KW-0873">Pyrrolidone carboxylic acid</keyword>
<keyword id="KW-0732">Signal</keyword>
<dbReference type="EC" id="1.11.1.10"/>
<dbReference type="EMBL" id="X04486">
    <property type="protein sequence ID" value="CAA28172.1"/>
    <property type="status" value="ALT_FRAME"/>
    <property type="molecule type" value="mRNA"/>
</dbReference>
<dbReference type="EMBL" id="M19025">
    <property type="protein sequence ID" value="AAA33026.1"/>
    <property type="status" value="ALT_FRAME"/>
    <property type="molecule type" value="Genomic_DNA"/>
</dbReference>
<dbReference type="EMBL" id="AJ300448">
    <property type="protein sequence ID" value="CAC16733.1"/>
    <property type="molecule type" value="Genomic_DNA"/>
</dbReference>
<dbReference type="EMBL" id="M28651">
    <property type="protein sequence ID" value="AAA33025.1"/>
    <property type="molecule type" value="mRNA"/>
</dbReference>
<dbReference type="PIR" id="A28557">
    <property type="entry name" value="A28557"/>
</dbReference>
<dbReference type="PDB" id="1CPO">
    <property type="method" value="X-ray"/>
    <property type="resolution" value="1.90 A"/>
    <property type="chains" value="A=22-319"/>
</dbReference>
<dbReference type="PDB" id="2CIV">
    <property type="method" value="X-ray"/>
    <property type="resolution" value="1.80 A"/>
    <property type="chains" value="A=22-319"/>
</dbReference>
<dbReference type="PDB" id="2CIW">
    <property type="method" value="X-ray"/>
    <property type="resolution" value="1.15 A"/>
    <property type="chains" value="A=22-319"/>
</dbReference>
<dbReference type="PDB" id="2CIX">
    <property type="method" value="X-ray"/>
    <property type="resolution" value="1.80 A"/>
    <property type="chains" value="A=22-319"/>
</dbReference>
<dbReference type="PDB" id="2CIY">
    <property type="method" value="X-ray"/>
    <property type="resolution" value="1.70 A"/>
    <property type="chains" value="A=22-319"/>
</dbReference>
<dbReference type="PDB" id="2CIZ">
    <property type="method" value="X-ray"/>
    <property type="resolution" value="1.30 A"/>
    <property type="chains" value="A=22-319"/>
</dbReference>
<dbReference type="PDB" id="2CJ0">
    <property type="method" value="X-ray"/>
    <property type="resolution" value="1.75 A"/>
    <property type="chains" value="A=22-319"/>
</dbReference>
<dbReference type="PDB" id="2CJ1">
    <property type="method" value="X-ray"/>
    <property type="resolution" value="1.70 A"/>
    <property type="chains" value="A=22-319"/>
</dbReference>
<dbReference type="PDB" id="2CJ2">
    <property type="method" value="X-ray"/>
    <property type="resolution" value="1.60 A"/>
    <property type="chains" value="A=22-319"/>
</dbReference>
<dbReference type="PDB" id="2CPO">
    <property type="method" value="X-ray"/>
    <property type="resolution" value="2.10 A"/>
    <property type="chains" value="A=22-319"/>
</dbReference>
<dbReference type="PDB" id="2J18">
    <property type="method" value="X-ray"/>
    <property type="resolution" value="1.75 A"/>
    <property type="chains" value="A=22-319"/>
</dbReference>
<dbReference type="PDB" id="2J19">
    <property type="method" value="X-ray"/>
    <property type="resolution" value="1.75 A"/>
    <property type="chains" value="A=22-319"/>
</dbReference>
<dbReference type="PDB" id="2J5M">
    <property type="method" value="X-ray"/>
    <property type="resolution" value="1.75 A"/>
    <property type="chains" value="A=22-319"/>
</dbReference>
<dbReference type="PDB" id="7RST">
    <property type="method" value="X-ray"/>
    <property type="resolution" value="1.69 A"/>
    <property type="chains" value="A=21-319"/>
</dbReference>
<dbReference type="PDBsum" id="1CPO"/>
<dbReference type="PDBsum" id="2CIV"/>
<dbReference type="PDBsum" id="2CIW"/>
<dbReference type="PDBsum" id="2CIX"/>
<dbReference type="PDBsum" id="2CIY"/>
<dbReference type="PDBsum" id="2CIZ"/>
<dbReference type="PDBsum" id="2CJ0"/>
<dbReference type="PDBsum" id="2CJ1"/>
<dbReference type="PDBsum" id="2CJ2"/>
<dbReference type="PDBsum" id="2CPO"/>
<dbReference type="PDBsum" id="2J18"/>
<dbReference type="PDBsum" id="2J19"/>
<dbReference type="PDBsum" id="2J5M"/>
<dbReference type="PDBsum" id="7RST"/>
<dbReference type="SMR" id="P04963"/>
<dbReference type="PeroxiBase" id="4070">
    <property type="entry name" value="CfuHalPrx"/>
</dbReference>
<dbReference type="GlyCosmos" id="P04963">
    <property type="glycosylation" value="14 sites, No reported glycans"/>
</dbReference>
<dbReference type="BRENDA" id="1.11.1.10">
    <property type="organism ID" value="1053"/>
</dbReference>
<dbReference type="EvolutionaryTrace" id="P04963"/>
<dbReference type="GO" id="GO:0016691">
    <property type="term" value="F:chloride peroxidase activity"/>
    <property type="evidence" value="ECO:0007669"/>
    <property type="project" value="UniProtKB-EC"/>
</dbReference>
<dbReference type="GO" id="GO:0046872">
    <property type="term" value="F:metal ion binding"/>
    <property type="evidence" value="ECO:0007669"/>
    <property type="project" value="UniProtKB-KW"/>
</dbReference>
<dbReference type="Gene3D" id="1.10.489.10">
    <property type="entry name" value="Chloroperoxidase-like"/>
    <property type="match status" value="1"/>
</dbReference>
<dbReference type="InterPro" id="IPR000028">
    <property type="entry name" value="Chloroperoxidase"/>
</dbReference>
<dbReference type="InterPro" id="IPR036851">
    <property type="entry name" value="Chloroperoxidase-like_sf"/>
</dbReference>
<dbReference type="PANTHER" id="PTHR33577:SF9">
    <property type="entry name" value="PEROXIDASE STCC"/>
    <property type="match status" value="1"/>
</dbReference>
<dbReference type="PANTHER" id="PTHR33577">
    <property type="entry name" value="STERIGMATOCYSTIN BIOSYNTHESIS PEROXIDASE STCC-RELATED"/>
    <property type="match status" value="1"/>
</dbReference>
<dbReference type="Pfam" id="PF01328">
    <property type="entry name" value="Peroxidase_2"/>
    <property type="match status" value="1"/>
</dbReference>
<dbReference type="SUPFAM" id="SSF47571">
    <property type="entry name" value="Cloroperoxidase"/>
    <property type="match status" value="2"/>
</dbReference>
<dbReference type="PROSITE" id="PS51405">
    <property type="entry name" value="HEME_HALOPEROXIDASE"/>
    <property type="match status" value="1"/>
</dbReference>
<proteinExistence type="evidence at protein level"/>